<name>UBIA_METCA</name>
<feature type="chain" id="PRO_0000262807" description="4-hydroxybenzoate octaprenyltransferase">
    <location>
        <begin position="1"/>
        <end position="292"/>
    </location>
</feature>
<feature type="transmembrane region" description="Helical" evidence="1">
    <location>
        <begin position="23"/>
        <end position="43"/>
    </location>
</feature>
<feature type="transmembrane region" description="Helical" evidence="1">
    <location>
        <begin position="47"/>
        <end position="67"/>
    </location>
</feature>
<feature type="transmembrane region" description="Helical" evidence="1">
    <location>
        <begin position="98"/>
        <end position="118"/>
    </location>
</feature>
<feature type="transmembrane region" description="Helical" evidence="1">
    <location>
        <begin position="141"/>
        <end position="161"/>
    </location>
</feature>
<feature type="transmembrane region" description="Helical" evidence="1">
    <location>
        <begin position="164"/>
        <end position="184"/>
    </location>
</feature>
<feature type="transmembrane region" description="Helical" evidence="1">
    <location>
        <begin position="211"/>
        <end position="231"/>
    </location>
</feature>
<feature type="transmembrane region" description="Helical" evidence="1">
    <location>
        <begin position="233"/>
        <end position="253"/>
    </location>
</feature>
<feature type="transmembrane region" description="Helical" evidence="1">
    <location>
        <begin position="270"/>
        <end position="290"/>
    </location>
</feature>
<keyword id="KW-0997">Cell inner membrane</keyword>
<keyword id="KW-1003">Cell membrane</keyword>
<keyword id="KW-0460">Magnesium</keyword>
<keyword id="KW-0472">Membrane</keyword>
<keyword id="KW-1185">Reference proteome</keyword>
<keyword id="KW-0808">Transferase</keyword>
<keyword id="KW-0812">Transmembrane</keyword>
<keyword id="KW-1133">Transmembrane helix</keyword>
<keyword id="KW-0831">Ubiquinone biosynthesis</keyword>
<organism>
    <name type="scientific">Methylococcus capsulatus (strain ATCC 33009 / NCIMB 11132 / Bath)</name>
    <dbReference type="NCBI Taxonomy" id="243233"/>
    <lineage>
        <taxon>Bacteria</taxon>
        <taxon>Pseudomonadati</taxon>
        <taxon>Pseudomonadota</taxon>
        <taxon>Gammaproteobacteria</taxon>
        <taxon>Methylococcales</taxon>
        <taxon>Methylococcaceae</taxon>
        <taxon>Methylococcus</taxon>
    </lineage>
</organism>
<accession>Q608Z9</accession>
<proteinExistence type="inferred from homology"/>
<sequence length="292" mass="32187">MNVPHSVKSRADAYWRLMRFDKPIGIFLLLWPALWALWIAGEGRPDPGVAAVIVFGVVLMRAAGCVINDYADREFDPHVERTRLRPIAAGEVTSKEALILFMVLCLTAFALVLTMNWLTIALSVPGAFLAASYPFTKRYTHLPQAYLGLAFGWAIPMTFAAQTGSIPVVAWALYAATVLWALIYDTMYAMVDREDDVKIGIKSTAILFGKYDREIIGALQIAMLAILAGIGRYLGLGGLYALGLAAAAGFSVYQQVLIFRREKSKCFRAFLNNHWFGAAVFAGLFADYLWAG</sequence>
<evidence type="ECO:0000255" key="1">
    <source>
        <dbReference type="HAMAP-Rule" id="MF_01635"/>
    </source>
</evidence>
<reference key="1">
    <citation type="journal article" date="2004" name="PLoS Biol.">
        <title>Genomic insights into methanotrophy: the complete genome sequence of Methylococcus capsulatus (Bath).</title>
        <authorList>
            <person name="Ward N.L."/>
            <person name="Larsen O."/>
            <person name="Sakwa J."/>
            <person name="Bruseth L."/>
            <person name="Khouri H.M."/>
            <person name="Durkin A.S."/>
            <person name="Dimitrov G."/>
            <person name="Jiang L."/>
            <person name="Scanlan D."/>
            <person name="Kang K.H."/>
            <person name="Lewis M.R."/>
            <person name="Nelson K.E."/>
            <person name="Methe B.A."/>
            <person name="Wu M."/>
            <person name="Heidelberg J.F."/>
            <person name="Paulsen I.T."/>
            <person name="Fouts D.E."/>
            <person name="Ravel J."/>
            <person name="Tettelin H."/>
            <person name="Ren Q."/>
            <person name="Read T.D."/>
            <person name="DeBoy R.T."/>
            <person name="Seshadri R."/>
            <person name="Salzberg S.L."/>
            <person name="Jensen H.B."/>
            <person name="Birkeland N.K."/>
            <person name="Nelson W.C."/>
            <person name="Dodson R.J."/>
            <person name="Grindhaug S.H."/>
            <person name="Holt I.E."/>
            <person name="Eidhammer I."/>
            <person name="Jonasen I."/>
            <person name="Vanaken S."/>
            <person name="Utterback T.R."/>
            <person name="Feldblyum T.V."/>
            <person name="Fraser C.M."/>
            <person name="Lillehaug J.R."/>
            <person name="Eisen J.A."/>
        </authorList>
    </citation>
    <scope>NUCLEOTIDE SEQUENCE [LARGE SCALE GENOMIC DNA]</scope>
    <source>
        <strain>ATCC 33009 / NCIMB 11132 / Bath</strain>
    </source>
</reference>
<protein>
    <recommendedName>
        <fullName evidence="1">4-hydroxybenzoate octaprenyltransferase</fullName>
        <ecNumber evidence="1">2.5.1.39</ecNumber>
    </recommendedName>
    <alternativeName>
        <fullName evidence="1">4-HB polyprenyltransferase</fullName>
    </alternativeName>
</protein>
<gene>
    <name evidence="1" type="primary">ubiA</name>
    <name type="ordered locus">MCA1336</name>
</gene>
<comment type="function">
    <text evidence="1">Catalyzes the prenylation of para-hydroxybenzoate (PHB) with an all-trans polyprenyl group. Mediates the second step in the final reaction sequence of ubiquinone-8 (UQ-8) biosynthesis, which is the condensation of the polyisoprenoid side chain with PHB, generating the first membrane-bound Q intermediate 3-octaprenyl-4-hydroxybenzoate.</text>
</comment>
<comment type="catalytic activity">
    <reaction evidence="1">
        <text>all-trans-octaprenyl diphosphate + 4-hydroxybenzoate = 4-hydroxy-3-(all-trans-octaprenyl)benzoate + diphosphate</text>
        <dbReference type="Rhea" id="RHEA:27782"/>
        <dbReference type="ChEBI" id="CHEBI:1617"/>
        <dbReference type="ChEBI" id="CHEBI:17879"/>
        <dbReference type="ChEBI" id="CHEBI:33019"/>
        <dbReference type="ChEBI" id="CHEBI:57711"/>
        <dbReference type="EC" id="2.5.1.39"/>
    </reaction>
</comment>
<comment type="cofactor">
    <cofactor evidence="1">
        <name>Mg(2+)</name>
        <dbReference type="ChEBI" id="CHEBI:18420"/>
    </cofactor>
</comment>
<comment type="pathway">
    <text evidence="1">Cofactor biosynthesis; ubiquinone biosynthesis.</text>
</comment>
<comment type="subcellular location">
    <subcellularLocation>
        <location evidence="1">Cell inner membrane</location>
        <topology evidence="1">Multi-pass membrane protein</topology>
    </subcellularLocation>
</comment>
<comment type="similarity">
    <text evidence="1">Belongs to the UbiA prenyltransferase family.</text>
</comment>
<dbReference type="EC" id="2.5.1.39" evidence="1"/>
<dbReference type="EMBL" id="AE017282">
    <property type="protein sequence ID" value="AAU92612.1"/>
    <property type="molecule type" value="Genomic_DNA"/>
</dbReference>
<dbReference type="RefSeq" id="WP_010960617.1">
    <property type="nucleotide sequence ID" value="NC_002977.6"/>
</dbReference>
<dbReference type="SMR" id="Q608Z9"/>
<dbReference type="STRING" id="243233.MCA1336"/>
<dbReference type="GeneID" id="88223617"/>
<dbReference type="KEGG" id="mca:MCA1336"/>
<dbReference type="eggNOG" id="COG0382">
    <property type="taxonomic scope" value="Bacteria"/>
</dbReference>
<dbReference type="HOGENOM" id="CLU_034879_1_0_6"/>
<dbReference type="UniPathway" id="UPA00232"/>
<dbReference type="Proteomes" id="UP000006821">
    <property type="component" value="Chromosome"/>
</dbReference>
<dbReference type="GO" id="GO:0005886">
    <property type="term" value="C:plasma membrane"/>
    <property type="evidence" value="ECO:0007669"/>
    <property type="project" value="UniProtKB-SubCell"/>
</dbReference>
<dbReference type="GO" id="GO:0008412">
    <property type="term" value="F:4-hydroxybenzoate polyprenyltransferase activity"/>
    <property type="evidence" value="ECO:0007669"/>
    <property type="project" value="UniProtKB-UniRule"/>
</dbReference>
<dbReference type="GO" id="GO:0006744">
    <property type="term" value="P:ubiquinone biosynthetic process"/>
    <property type="evidence" value="ECO:0007669"/>
    <property type="project" value="UniProtKB-UniRule"/>
</dbReference>
<dbReference type="CDD" id="cd13959">
    <property type="entry name" value="PT_UbiA_COQ2"/>
    <property type="match status" value="1"/>
</dbReference>
<dbReference type="FunFam" id="1.10.357.140:FF:000002">
    <property type="entry name" value="4-hydroxybenzoate octaprenyltransferase"/>
    <property type="match status" value="1"/>
</dbReference>
<dbReference type="FunFam" id="1.20.120.1780:FF:000001">
    <property type="entry name" value="4-hydroxybenzoate octaprenyltransferase"/>
    <property type="match status" value="1"/>
</dbReference>
<dbReference type="Gene3D" id="1.10.357.140">
    <property type="entry name" value="UbiA prenyltransferase"/>
    <property type="match status" value="1"/>
</dbReference>
<dbReference type="Gene3D" id="1.20.120.1780">
    <property type="entry name" value="UbiA prenyltransferase"/>
    <property type="match status" value="1"/>
</dbReference>
<dbReference type="HAMAP" id="MF_01635">
    <property type="entry name" value="UbiA"/>
    <property type="match status" value="1"/>
</dbReference>
<dbReference type="InterPro" id="IPR006370">
    <property type="entry name" value="HB_polyprenyltransferase-like"/>
</dbReference>
<dbReference type="InterPro" id="IPR039653">
    <property type="entry name" value="Prenyltransferase"/>
</dbReference>
<dbReference type="InterPro" id="IPR000537">
    <property type="entry name" value="UbiA_prenyltransferase"/>
</dbReference>
<dbReference type="InterPro" id="IPR030470">
    <property type="entry name" value="UbiA_prenylTrfase_CS"/>
</dbReference>
<dbReference type="InterPro" id="IPR044878">
    <property type="entry name" value="UbiA_sf"/>
</dbReference>
<dbReference type="NCBIfam" id="TIGR01474">
    <property type="entry name" value="ubiA_proteo"/>
    <property type="match status" value="1"/>
</dbReference>
<dbReference type="PANTHER" id="PTHR11048:SF28">
    <property type="entry name" value="4-HYDROXYBENZOATE POLYPRENYLTRANSFERASE, MITOCHONDRIAL"/>
    <property type="match status" value="1"/>
</dbReference>
<dbReference type="PANTHER" id="PTHR11048">
    <property type="entry name" value="PRENYLTRANSFERASES"/>
    <property type="match status" value="1"/>
</dbReference>
<dbReference type="Pfam" id="PF01040">
    <property type="entry name" value="UbiA"/>
    <property type="match status" value="1"/>
</dbReference>
<dbReference type="PROSITE" id="PS00943">
    <property type="entry name" value="UBIA"/>
    <property type="match status" value="1"/>
</dbReference>